<dbReference type="EC" id="6.1.1.21" evidence="1"/>
<dbReference type="EMBL" id="AE008691">
    <property type="protein sequence ID" value="AAM24457.1"/>
    <property type="molecule type" value="Genomic_DNA"/>
</dbReference>
<dbReference type="RefSeq" id="WP_011025556.1">
    <property type="nucleotide sequence ID" value="NC_003869.1"/>
</dbReference>
<dbReference type="SMR" id="Q8RAI8"/>
<dbReference type="STRING" id="273068.TTE1230"/>
<dbReference type="KEGG" id="tte:TTE1230"/>
<dbReference type="eggNOG" id="COG0124">
    <property type="taxonomic scope" value="Bacteria"/>
</dbReference>
<dbReference type="HOGENOM" id="CLU_025113_1_1_9"/>
<dbReference type="OrthoDB" id="9800814at2"/>
<dbReference type="Proteomes" id="UP000000555">
    <property type="component" value="Chromosome"/>
</dbReference>
<dbReference type="GO" id="GO:0005737">
    <property type="term" value="C:cytoplasm"/>
    <property type="evidence" value="ECO:0007669"/>
    <property type="project" value="UniProtKB-SubCell"/>
</dbReference>
<dbReference type="GO" id="GO:0005524">
    <property type="term" value="F:ATP binding"/>
    <property type="evidence" value="ECO:0007669"/>
    <property type="project" value="UniProtKB-UniRule"/>
</dbReference>
<dbReference type="GO" id="GO:0140096">
    <property type="term" value="F:catalytic activity, acting on a protein"/>
    <property type="evidence" value="ECO:0007669"/>
    <property type="project" value="UniProtKB-ARBA"/>
</dbReference>
<dbReference type="GO" id="GO:0004821">
    <property type="term" value="F:histidine-tRNA ligase activity"/>
    <property type="evidence" value="ECO:0007669"/>
    <property type="project" value="UniProtKB-UniRule"/>
</dbReference>
<dbReference type="GO" id="GO:0016740">
    <property type="term" value="F:transferase activity"/>
    <property type="evidence" value="ECO:0007669"/>
    <property type="project" value="UniProtKB-ARBA"/>
</dbReference>
<dbReference type="GO" id="GO:0006427">
    <property type="term" value="P:histidyl-tRNA aminoacylation"/>
    <property type="evidence" value="ECO:0007669"/>
    <property type="project" value="UniProtKB-UniRule"/>
</dbReference>
<dbReference type="CDD" id="cd00773">
    <property type="entry name" value="HisRS-like_core"/>
    <property type="match status" value="1"/>
</dbReference>
<dbReference type="CDD" id="cd00859">
    <property type="entry name" value="HisRS_anticodon"/>
    <property type="match status" value="1"/>
</dbReference>
<dbReference type="FunFam" id="3.30.930.10:FF:000005">
    <property type="entry name" value="Histidine--tRNA ligase"/>
    <property type="match status" value="1"/>
</dbReference>
<dbReference type="Gene3D" id="3.40.50.800">
    <property type="entry name" value="Anticodon-binding domain"/>
    <property type="match status" value="1"/>
</dbReference>
<dbReference type="Gene3D" id="3.30.930.10">
    <property type="entry name" value="Bira Bifunctional Protein, Domain 2"/>
    <property type="match status" value="1"/>
</dbReference>
<dbReference type="HAMAP" id="MF_00127">
    <property type="entry name" value="His_tRNA_synth"/>
    <property type="match status" value="1"/>
</dbReference>
<dbReference type="InterPro" id="IPR006195">
    <property type="entry name" value="aa-tRNA-synth_II"/>
</dbReference>
<dbReference type="InterPro" id="IPR045864">
    <property type="entry name" value="aa-tRNA-synth_II/BPL/LPL"/>
</dbReference>
<dbReference type="InterPro" id="IPR004154">
    <property type="entry name" value="Anticodon-bd"/>
</dbReference>
<dbReference type="InterPro" id="IPR036621">
    <property type="entry name" value="Anticodon-bd_dom_sf"/>
</dbReference>
<dbReference type="InterPro" id="IPR015807">
    <property type="entry name" value="His-tRNA-ligase"/>
</dbReference>
<dbReference type="InterPro" id="IPR041715">
    <property type="entry name" value="HisRS-like_core"/>
</dbReference>
<dbReference type="InterPro" id="IPR004516">
    <property type="entry name" value="HisRS/HisZ"/>
</dbReference>
<dbReference type="InterPro" id="IPR033656">
    <property type="entry name" value="HisRS_anticodon"/>
</dbReference>
<dbReference type="NCBIfam" id="TIGR00442">
    <property type="entry name" value="hisS"/>
    <property type="match status" value="1"/>
</dbReference>
<dbReference type="PANTHER" id="PTHR43707:SF1">
    <property type="entry name" value="HISTIDINE--TRNA LIGASE, MITOCHONDRIAL-RELATED"/>
    <property type="match status" value="1"/>
</dbReference>
<dbReference type="PANTHER" id="PTHR43707">
    <property type="entry name" value="HISTIDYL-TRNA SYNTHETASE"/>
    <property type="match status" value="1"/>
</dbReference>
<dbReference type="Pfam" id="PF03129">
    <property type="entry name" value="HGTP_anticodon"/>
    <property type="match status" value="1"/>
</dbReference>
<dbReference type="Pfam" id="PF13393">
    <property type="entry name" value="tRNA-synt_His"/>
    <property type="match status" value="1"/>
</dbReference>
<dbReference type="PIRSF" id="PIRSF001549">
    <property type="entry name" value="His-tRNA_synth"/>
    <property type="match status" value="1"/>
</dbReference>
<dbReference type="SUPFAM" id="SSF52954">
    <property type="entry name" value="Class II aaRS ABD-related"/>
    <property type="match status" value="1"/>
</dbReference>
<dbReference type="SUPFAM" id="SSF55681">
    <property type="entry name" value="Class II aaRS and biotin synthetases"/>
    <property type="match status" value="1"/>
</dbReference>
<dbReference type="PROSITE" id="PS50862">
    <property type="entry name" value="AA_TRNA_LIGASE_II"/>
    <property type="match status" value="1"/>
</dbReference>
<gene>
    <name evidence="1" type="primary">hisS</name>
    <name type="ordered locus">TTE1230</name>
</gene>
<comment type="catalytic activity">
    <reaction evidence="1">
        <text>tRNA(His) + L-histidine + ATP = L-histidyl-tRNA(His) + AMP + diphosphate + H(+)</text>
        <dbReference type="Rhea" id="RHEA:17313"/>
        <dbReference type="Rhea" id="RHEA-COMP:9665"/>
        <dbReference type="Rhea" id="RHEA-COMP:9689"/>
        <dbReference type="ChEBI" id="CHEBI:15378"/>
        <dbReference type="ChEBI" id="CHEBI:30616"/>
        <dbReference type="ChEBI" id="CHEBI:33019"/>
        <dbReference type="ChEBI" id="CHEBI:57595"/>
        <dbReference type="ChEBI" id="CHEBI:78442"/>
        <dbReference type="ChEBI" id="CHEBI:78527"/>
        <dbReference type="ChEBI" id="CHEBI:456215"/>
        <dbReference type="EC" id="6.1.1.21"/>
    </reaction>
</comment>
<comment type="subunit">
    <text evidence="1">Homodimer.</text>
</comment>
<comment type="subcellular location">
    <subcellularLocation>
        <location evidence="1">Cytoplasm</location>
    </subcellularLocation>
</comment>
<comment type="similarity">
    <text evidence="1">Belongs to the class-II aminoacyl-tRNA synthetase family.</text>
</comment>
<sequence length="417" mass="47364">MLTKAPRGTKDVLPSESYKWQYVENLMREICEFYGYKEIRTPGFEHTELFLRGVGESTDIVRKEMYTFNDRSGRSITLKAEGTSPAVRAFIEHGLYAETQPTKLYYITPVYRYEKPQAGRLREHHQFGVEIFGAKSASADAEVISIAMTLLKKLGLNNLELRINSVGCPVCRKNYNKVLKEFLKEHLDELCDDCKVRYEVNPLRVLDCKVESCRRVTGEAPLITDYLCDDCRNHFEELKKYLDAMGYDYIVDPRIVRGLDYYTKTAFEIISKDIGAQGTVCGGGRYDGLIEECGGPSMPGVGFGMGIERLLLTLEQNGIEIPKPEGPDLFIAYIGDEAKLFTFTLANKLRFNGLKVEIDHMERSLKAQMKYANKLNAKFAVVIGEEELESKKVKLKNMATGEETEILIDEIEKAIKN</sequence>
<proteinExistence type="inferred from homology"/>
<reference key="1">
    <citation type="journal article" date="2002" name="Genome Res.">
        <title>A complete sequence of the T. tengcongensis genome.</title>
        <authorList>
            <person name="Bao Q."/>
            <person name="Tian Y."/>
            <person name="Li W."/>
            <person name="Xu Z."/>
            <person name="Xuan Z."/>
            <person name="Hu S."/>
            <person name="Dong W."/>
            <person name="Yang J."/>
            <person name="Chen Y."/>
            <person name="Xue Y."/>
            <person name="Xu Y."/>
            <person name="Lai X."/>
            <person name="Huang L."/>
            <person name="Dong X."/>
            <person name="Ma Y."/>
            <person name="Ling L."/>
            <person name="Tan H."/>
            <person name="Chen R."/>
            <person name="Wang J."/>
            <person name="Yu J."/>
            <person name="Yang H."/>
        </authorList>
    </citation>
    <scope>NUCLEOTIDE SEQUENCE [LARGE SCALE GENOMIC DNA]</scope>
    <source>
        <strain>DSM 15242 / JCM 11007 / NBRC 100824 / MB4</strain>
    </source>
</reference>
<keyword id="KW-0030">Aminoacyl-tRNA synthetase</keyword>
<keyword id="KW-0067">ATP-binding</keyword>
<keyword id="KW-0963">Cytoplasm</keyword>
<keyword id="KW-0436">Ligase</keyword>
<keyword id="KW-0547">Nucleotide-binding</keyword>
<keyword id="KW-0648">Protein biosynthesis</keyword>
<keyword id="KW-1185">Reference proteome</keyword>
<accession>Q8RAI8</accession>
<feature type="chain" id="PRO_0000136280" description="Histidine--tRNA ligase">
    <location>
        <begin position="1"/>
        <end position="417"/>
    </location>
</feature>
<name>SYH_CALS4</name>
<organism>
    <name type="scientific">Caldanaerobacter subterraneus subsp. tengcongensis (strain DSM 15242 / JCM 11007 / NBRC 100824 / MB4)</name>
    <name type="common">Thermoanaerobacter tengcongensis</name>
    <dbReference type="NCBI Taxonomy" id="273068"/>
    <lineage>
        <taxon>Bacteria</taxon>
        <taxon>Bacillati</taxon>
        <taxon>Bacillota</taxon>
        <taxon>Clostridia</taxon>
        <taxon>Thermoanaerobacterales</taxon>
        <taxon>Thermoanaerobacteraceae</taxon>
        <taxon>Caldanaerobacter</taxon>
    </lineage>
</organism>
<protein>
    <recommendedName>
        <fullName evidence="1">Histidine--tRNA ligase</fullName>
        <ecNumber evidence="1">6.1.1.21</ecNumber>
    </recommendedName>
    <alternativeName>
        <fullName evidence="1">Histidyl-tRNA synthetase</fullName>
        <shortName evidence="1">HisRS</shortName>
    </alternativeName>
</protein>
<evidence type="ECO:0000255" key="1">
    <source>
        <dbReference type="HAMAP-Rule" id="MF_00127"/>
    </source>
</evidence>